<comment type="function">
    <text evidence="1">Part of the outer membrane protein assembly complex, which is involved in assembly and insertion of beta-barrel proteins into the outer membrane.</text>
</comment>
<comment type="subunit">
    <text evidence="1">Part of the Bam complex.</text>
</comment>
<comment type="subcellular location">
    <subcellularLocation>
        <location evidence="1">Cell outer membrane</location>
        <topology evidence="1">Lipid-anchor</topology>
    </subcellularLocation>
</comment>
<comment type="similarity">
    <text evidence="1">Belongs to the BamE family.</text>
</comment>
<evidence type="ECO:0000255" key="1">
    <source>
        <dbReference type="HAMAP-Rule" id="MF_00925"/>
    </source>
</evidence>
<evidence type="ECO:0000256" key="2">
    <source>
        <dbReference type="SAM" id="MobiDB-lite"/>
    </source>
</evidence>
<gene>
    <name evidence="1" type="primary">bamE</name>
    <name type="synonym">omlA</name>
    <name type="ordered locus">HELO_4163</name>
</gene>
<reference key="1">
    <citation type="journal article" date="2011" name="Environ. Microbiol.">
        <title>A blueprint of ectoine metabolism from the genome of the industrial producer Halomonas elongata DSM 2581(T).</title>
        <authorList>
            <person name="Schwibbert K."/>
            <person name="Marin-Sanguino A."/>
            <person name="Bagyan I."/>
            <person name="Heidrich G."/>
            <person name="Lentzen G."/>
            <person name="Seitz H."/>
            <person name="Rampp M."/>
            <person name="Schuster S.C."/>
            <person name="Klenk H.P."/>
            <person name="Pfeiffer F."/>
            <person name="Oesterhelt D."/>
            <person name="Kunte H.J."/>
        </authorList>
    </citation>
    <scope>NUCLEOTIDE SEQUENCE [LARGE SCALE GENOMIC DNA]</scope>
    <source>
        <strain>ATCC 33173 / DSM 2581 / NBRC 15536 / NCIMB 2198 / 1H9</strain>
    </source>
</reference>
<sequence length="152" mass="16951">MIDQNHDSEEQAQMQKLTRTVTLTVALTLVSGCSYFGVYKRDLAQGNLVTSAMAEQLQPGMTRQQVVNLMGSPMLEAPFDAQQWDYVYRLDKAYGGVEQRRLTLTFQGNRLADIDRHGDFSRPPSVADERGIGPTDSTNARGNLLNARPDDE</sequence>
<dbReference type="EMBL" id="FN869568">
    <property type="protein sequence ID" value="CBV44047.1"/>
    <property type="molecule type" value="Genomic_DNA"/>
</dbReference>
<dbReference type="RefSeq" id="WP_049786311.1">
    <property type="nucleotide sequence ID" value="NZ_CP139472.1"/>
</dbReference>
<dbReference type="SMR" id="E1VAU8"/>
<dbReference type="STRING" id="768066.HELO_4163"/>
<dbReference type="GeneID" id="91011598"/>
<dbReference type="KEGG" id="hel:HELO_4163"/>
<dbReference type="eggNOG" id="COG2913">
    <property type="taxonomic scope" value="Bacteria"/>
</dbReference>
<dbReference type="HOGENOM" id="CLU_083835_2_2_6"/>
<dbReference type="OrthoDB" id="9808250at2"/>
<dbReference type="Proteomes" id="UP000008707">
    <property type="component" value="Chromosome"/>
</dbReference>
<dbReference type="GO" id="GO:1990063">
    <property type="term" value="C:Bam protein complex"/>
    <property type="evidence" value="ECO:0007669"/>
    <property type="project" value="TreeGrafter"/>
</dbReference>
<dbReference type="GO" id="GO:0030674">
    <property type="term" value="F:protein-macromolecule adaptor activity"/>
    <property type="evidence" value="ECO:0007669"/>
    <property type="project" value="TreeGrafter"/>
</dbReference>
<dbReference type="GO" id="GO:0043165">
    <property type="term" value="P:Gram-negative-bacterium-type cell outer membrane assembly"/>
    <property type="evidence" value="ECO:0007669"/>
    <property type="project" value="UniProtKB-UniRule"/>
</dbReference>
<dbReference type="GO" id="GO:0051205">
    <property type="term" value="P:protein insertion into membrane"/>
    <property type="evidence" value="ECO:0007669"/>
    <property type="project" value="UniProtKB-UniRule"/>
</dbReference>
<dbReference type="Gene3D" id="3.30.1450.10">
    <property type="match status" value="1"/>
</dbReference>
<dbReference type="HAMAP" id="MF_00925">
    <property type="entry name" value="OM_assembly_BamE"/>
    <property type="match status" value="1"/>
</dbReference>
<dbReference type="InterPro" id="IPR026592">
    <property type="entry name" value="BamE"/>
</dbReference>
<dbReference type="InterPro" id="IPR037873">
    <property type="entry name" value="BamE-like"/>
</dbReference>
<dbReference type="InterPro" id="IPR007450">
    <property type="entry name" value="BamE_dom"/>
</dbReference>
<dbReference type="PANTHER" id="PTHR37482">
    <property type="entry name" value="OUTER MEMBRANE PROTEIN ASSEMBLY FACTOR BAME"/>
    <property type="match status" value="1"/>
</dbReference>
<dbReference type="PANTHER" id="PTHR37482:SF1">
    <property type="entry name" value="OUTER MEMBRANE PROTEIN ASSEMBLY FACTOR BAME"/>
    <property type="match status" value="1"/>
</dbReference>
<dbReference type="Pfam" id="PF04355">
    <property type="entry name" value="BamE"/>
    <property type="match status" value="1"/>
</dbReference>
<protein>
    <recommendedName>
        <fullName evidence="1">Outer membrane protein assembly factor BamE</fullName>
    </recommendedName>
</protein>
<accession>E1VAU8</accession>
<keyword id="KW-0998">Cell outer membrane</keyword>
<keyword id="KW-0449">Lipoprotein</keyword>
<keyword id="KW-0472">Membrane</keyword>
<keyword id="KW-0564">Palmitate</keyword>
<keyword id="KW-0732">Signal</keyword>
<name>BAME_HALED</name>
<organism>
    <name type="scientific">Halomonas elongata (strain ATCC 33173 / DSM 2581 / NBRC 15536 / NCIMB 2198 / 1H9)</name>
    <dbReference type="NCBI Taxonomy" id="768066"/>
    <lineage>
        <taxon>Bacteria</taxon>
        <taxon>Pseudomonadati</taxon>
        <taxon>Pseudomonadota</taxon>
        <taxon>Gammaproteobacteria</taxon>
        <taxon>Oceanospirillales</taxon>
        <taxon>Halomonadaceae</taxon>
        <taxon>Halomonas</taxon>
    </lineage>
</organism>
<feature type="signal peptide" evidence="1">
    <location>
        <begin position="1"/>
        <end position="32"/>
    </location>
</feature>
<feature type="chain" id="PRO_0000417864" description="Outer membrane protein assembly factor BamE">
    <location>
        <begin position="33"/>
        <end position="152"/>
    </location>
</feature>
<feature type="region of interest" description="Disordered" evidence="2">
    <location>
        <begin position="114"/>
        <end position="152"/>
    </location>
</feature>
<feature type="lipid moiety-binding region" description="N-palmitoyl cysteine" evidence="1">
    <location>
        <position position="33"/>
    </location>
</feature>
<feature type="lipid moiety-binding region" description="S-diacylglycerol cysteine" evidence="1">
    <location>
        <position position="33"/>
    </location>
</feature>
<proteinExistence type="inferred from homology"/>